<feature type="chain" id="PRO_0000367989" description="Probable protein phosphatase 2C 68">
    <location>
        <begin position="1"/>
        <end position="393"/>
    </location>
</feature>
<feature type="domain" description="PPM-type phosphatase" evidence="3">
    <location>
        <begin position="56"/>
        <end position="359"/>
    </location>
</feature>
<feature type="binding site" evidence="1">
    <location>
        <position position="87"/>
    </location>
    <ligand>
        <name>Mn(2+)</name>
        <dbReference type="ChEBI" id="CHEBI:29035"/>
        <label>1</label>
    </ligand>
</feature>
<feature type="binding site" evidence="1">
    <location>
        <position position="87"/>
    </location>
    <ligand>
        <name>Mn(2+)</name>
        <dbReference type="ChEBI" id="CHEBI:29035"/>
        <label>2</label>
    </ligand>
</feature>
<feature type="binding site" evidence="1">
    <location>
        <position position="88"/>
    </location>
    <ligand>
        <name>Mn(2+)</name>
        <dbReference type="ChEBI" id="CHEBI:29035"/>
        <label>1</label>
    </ligand>
</feature>
<feature type="binding site" evidence="1">
    <location>
        <position position="291"/>
    </location>
    <ligand>
        <name>Mn(2+)</name>
        <dbReference type="ChEBI" id="CHEBI:29035"/>
        <label>2</label>
    </ligand>
</feature>
<feature type="binding site" evidence="1">
    <location>
        <position position="350"/>
    </location>
    <ligand>
        <name>Mn(2+)</name>
        <dbReference type="ChEBI" id="CHEBI:29035"/>
        <label>2</label>
    </ligand>
</feature>
<feature type="sequence conflict" description="In Ref. 4; AAM61277." evidence="7" ref="4">
    <original>L</original>
    <variation>S</variation>
    <location>
        <position position="268"/>
    </location>
</feature>
<organism>
    <name type="scientific">Arabidopsis thaliana</name>
    <name type="common">Mouse-ear cress</name>
    <dbReference type="NCBI Taxonomy" id="3702"/>
    <lineage>
        <taxon>Eukaryota</taxon>
        <taxon>Viridiplantae</taxon>
        <taxon>Streptophyta</taxon>
        <taxon>Embryophyta</taxon>
        <taxon>Tracheophyta</taxon>
        <taxon>Spermatophyta</taxon>
        <taxon>Magnoliopsida</taxon>
        <taxon>eudicotyledons</taxon>
        <taxon>Gunneridae</taxon>
        <taxon>Pentapetalae</taxon>
        <taxon>rosids</taxon>
        <taxon>malvids</taxon>
        <taxon>Brassicales</taxon>
        <taxon>Brassicaceae</taxon>
        <taxon>Camelineae</taxon>
        <taxon>Arabidopsis</taxon>
    </lineage>
</organism>
<protein>
    <recommendedName>
        <fullName evidence="5">Probable protein phosphatase 2C 68</fullName>
        <shortName evidence="5">AtPP2C68</shortName>
        <ecNumber evidence="2">3.1.3.16</ecNumber>
    </recommendedName>
</protein>
<proteinExistence type="evidence at transcript level"/>
<sequence>MFSWLARMALFCLRPMRRYGRMNRDDDDDDDHDGDSSSSGDSLLWSRELERHSFGDFSIAVVQANEVIEDHSQVETGNGAVFVGVYDGHGGPEASRYISDHLFSHLMRVSRERSCISEEALRAAFSATEEGFLTLVRRTCGLKPLIAAVGSCCLVGVIWKGTLLIANVGDSRAVLGSMGSNNNRSNKIVAEQLTSDHNAALEEVRQELRSLHPDDSHIVVLKHGVWRIKGIIQVSRSIGDAYLKRPEFSLDPSFPRFHLAEELQRPVLSAEPCVYTRVLQTSDKFVIFASDGLWEQMTNQQAVEIVNKHPRPGIARRLVRRAITIAAKKREMNYDDLKKVERGVRRFFHDDITVVVIFIDNELLMVEKATVPELSIKGFSHTVGPSKFSIFLS</sequence>
<gene>
    <name evidence="5" type="primary">PP2C68</name>
    <name evidence="6" type="synonym">PP2C-D9</name>
    <name evidence="8" type="ordered locus">At5g06750</name>
    <name evidence="9" type="ORF">MPH15.11</name>
</gene>
<name>P2C68_ARATH</name>
<reference key="1">
    <citation type="submission" date="2000-05" db="EMBL/GenBank/DDBJ databases">
        <title>Structural analysis of Arabidopsis thaliana chromosome 5. XI.</title>
        <authorList>
            <person name="Kaneko T."/>
            <person name="Katoh T."/>
            <person name="Asamizu E."/>
            <person name="Sato S."/>
            <person name="Nakamura Y."/>
            <person name="Kotani H."/>
            <person name="Tabata S."/>
        </authorList>
    </citation>
    <scope>NUCLEOTIDE SEQUENCE [LARGE SCALE GENOMIC DNA]</scope>
    <source>
        <strain>cv. Columbia</strain>
    </source>
</reference>
<reference key="2">
    <citation type="journal article" date="2017" name="Plant J.">
        <title>Araport11: a complete reannotation of the Arabidopsis thaliana reference genome.</title>
        <authorList>
            <person name="Cheng C.Y."/>
            <person name="Krishnakumar V."/>
            <person name="Chan A.P."/>
            <person name="Thibaud-Nissen F."/>
            <person name="Schobel S."/>
            <person name="Town C.D."/>
        </authorList>
    </citation>
    <scope>GENOME REANNOTATION</scope>
    <source>
        <strain>cv. Columbia</strain>
    </source>
</reference>
<reference key="3">
    <citation type="journal article" date="2003" name="Science">
        <title>Empirical analysis of transcriptional activity in the Arabidopsis genome.</title>
        <authorList>
            <person name="Yamada K."/>
            <person name="Lim J."/>
            <person name="Dale J.M."/>
            <person name="Chen H."/>
            <person name="Shinn P."/>
            <person name="Palm C.J."/>
            <person name="Southwick A.M."/>
            <person name="Wu H.C."/>
            <person name="Kim C.J."/>
            <person name="Nguyen M."/>
            <person name="Pham P.K."/>
            <person name="Cheuk R.F."/>
            <person name="Karlin-Newmann G."/>
            <person name="Liu S.X."/>
            <person name="Lam B."/>
            <person name="Sakano H."/>
            <person name="Wu T."/>
            <person name="Yu G."/>
            <person name="Miranda M."/>
            <person name="Quach H.L."/>
            <person name="Tripp M."/>
            <person name="Chang C.H."/>
            <person name="Lee J.M."/>
            <person name="Toriumi M.J."/>
            <person name="Chan M.M."/>
            <person name="Tang C.C."/>
            <person name="Onodera C.S."/>
            <person name="Deng J.M."/>
            <person name="Akiyama K."/>
            <person name="Ansari Y."/>
            <person name="Arakawa T."/>
            <person name="Banh J."/>
            <person name="Banno F."/>
            <person name="Bowser L."/>
            <person name="Brooks S.Y."/>
            <person name="Carninci P."/>
            <person name="Chao Q."/>
            <person name="Choy N."/>
            <person name="Enju A."/>
            <person name="Goldsmith A.D."/>
            <person name="Gurjal M."/>
            <person name="Hansen N.F."/>
            <person name="Hayashizaki Y."/>
            <person name="Johnson-Hopson C."/>
            <person name="Hsuan V.W."/>
            <person name="Iida K."/>
            <person name="Karnes M."/>
            <person name="Khan S."/>
            <person name="Koesema E."/>
            <person name="Ishida J."/>
            <person name="Jiang P.X."/>
            <person name="Jones T."/>
            <person name="Kawai J."/>
            <person name="Kamiya A."/>
            <person name="Meyers C."/>
            <person name="Nakajima M."/>
            <person name="Narusaka M."/>
            <person name="Seki M."/>
            <person name="Sakurai T."/>
            <person name="Satou M."/>
            <person name="Tamse R."/>
            <person name="Vaysberg M."/>
            <person name="Wallender E.K."/>
            <person name="Wong C."/>
            <person name="Yamamura Y."/>
            <person name="Yuan S."/>
            <person name="Shinozaki K."/>
            <person name="Davis R.W."/>
            <person name="Theologis A."/>
            <person name="Ecker J.R."/>
        </authorList>
    </citation>
    <scope>NUCLEOTIDE SEQUENCE [LARGE SCALE MRNA]</scope>
    <source>
        <strain>cv. Columbia</strain>
    </source>
</reference>
<reference key="4">
    <citation type="submission" date="2002-03" db="EMBL/GenBank/DDBJ databases">
        <title>Full-length cDNA from Arabidopsis thaliana.</title>
        <authorList>
            <person name="Brover V.V."/>
            <person name="Troukhan M.E."/>
            <person name="Alexandrov N.A."/>
            <person name="Lu Y.-P."/>
            <person name="Flavell R.B."/>
            <person name="Feldmann K.A."/>
        </authorList>
    </citation>
    <scope>NUCLEOTIDE SEQUENCE [LARGE SCALE MRNA]</scope>
</reference>
<reference key="5">
    <citation type="journal article" date="2008" name="BMC Genomics">
        <title>Genome-wide and expression analysis of protein phosphatase 2C in rice and Arabidopsis.</title>
        <authorList>
            <person name="Xue T."/>
            <person name="Wang D."/>
            <person name="Zhang S."/>
            <person name="Ehlting J."/>
            <person name="Ni F."/>
            <person name="Jacab S."/>
            <person name="Zheng C."/>
            <person name="Zhong Y."/>
        </authorList>
    </citation>
    <scope>GENE FAMILY</scope>
    <scope>NOMENCLATURE</scope>
</reference>
<reference key="6">
    <citation type="journal article" date="2014" name="Plant Cell">
        <title>SAUR inhibition of PP2C-D phosphatases activates plasma membrane H+-ATPases to promote cell expansion in Arabidopsis.</title>
        <authorList>
            <person name="Spartz A.K."/>
            <person name="Ren H."/>
            <person name="Park M.Y."/>
            <person name="Grandt K.N."/>
            <person name="Lee S.H."/>
            <person name="Murphy A.S."/>
            <person name="Sussman M.R."/>
            <person name="Overvoorde P.J."/>
            <person name="Gray W.M."/>
        </authorList>
    </citation>
    <scope>FUNCTION</scope>
    <scope>DISRUPTION PHENOTYPE</scope>
    <scope>GENE FAMILY</scope>
    <scope>NOMENCLATURE</scope>
    <source>
        <strain>cv. Columbia</strain>
    </source>
</reference>
<dbReference type="EC" id="3.1.3.16" evidence="2"/>
<dbReference type="EMBL" id="AP002032">
    <property type="protein sequence ID" value="BAB09809.1"/>
    <property type="status" value="ALT_INIT"/>
    <property type="molecule type" value="Genomic_DNA"/>
</dbReference>
<dbReference type="EMBL" id="CP002688">
    <property type="protein sequence ID" value="AED91058.1"/>
    <property type="molecule type" value="Genomic_DNA"/>
</dbReference>
<dbReference type="EMBL" id="CP002688">
    <property type="protein sequence ID" value="AED91060.1"/>
    <property type="molecule type" value="Genomic_DNA"/>
</dbReference>
<dbReference type="EMBL" id="BT004178">
    <property type="protein sequence ID" value="AAO42197.1"/>
    <property type="molecule type" value="mRNA"/>
</dbReference>
<dbReference type="EMBL" id="BT005462">
    <property type="protein sequence ID" value="AAO63882.1"/>
    <property type="molecule type" value="mRNA"/>
</dbReference>
<dbReference type="EMBL" id="AY084703">
    <property type="protein sequence ID" value="AAM61277.1"/>
    <property type="molecule type" value="mRNA"/>
</dbReference>
<dbReference type="RefSeq" id="NP_001119181.1">
    <molecule id="Q84JD5-1"/>
    <property type="nucleotide sequence ID" value="NM_001125709.1"/>
</dbReference>
<dbReference type="RefSeq" id="NP_568174.1">
    <molecule id="Q84JD5-1"/>
    <property type="nucleotide sequence ID" value="NM_120758.4"/>
</dbReference>
<dbReference type="SMR" id="Q84JD5"/>
<dbReference type="BioGRID" id="15843">
    <property type="interactions" value="1"/>
</dbReference>
<dbReference type="FunCoup" id="Q84JD5">
    <property type="interactions" value="3481"/>
</dbReference>
<dbReference type="IntAct" id="Q84JD5">
    <property type="interactions" value="1"/>
</dbReference>
<dbReference type="MINT" id="Q84JD5"/>
<dbReference type="STRING" id="3702.Q84JD5"/>
<dbReference type="PaxDb" id="3702-AT5G06750.3"/>
<dbReference type="ProteomicsDB" id="250911">
    <molecule id="Q84JD5-1"/>
</dbReference>
<dbReference type="EnsemblPlants" id="AT5G06750.1">
    <molecule id="Q84JD5-1"/>
    <property type="protein sequence ID" value="AT5G06750.1"/>
    <property type="gene ID" value="AT5G06750"/>
</dbReference>
<dbReference type="EnsemblPlants" id="AT5G06750.3">
    <molecule id="Q84JD5-1"/>
    <property type="protein sequence ID" value="AT5G06750.3"/>
    <property type="gene ID" value="AT5G06750"/>
</dbReference>
<dbReference type="GeneID" id="830564"/>
<dbReference type="Gramene" id="AT5G06750.1">
    <molecule id="Q84JD5-1"/>
    <property type="protein sequence ID" value="AT5G06750.1"/>
    <property type="gene ID" value="AT5G06750"/>
</dbReference>
<dbReference type="Gramene" id="AT5G06750.3">
    <molecule id="Q84JD5-1"/>
    <property type="protein sequence ID" value="AT5G06750.3"/>
    <property type="gene ID" value="AT5G06750"/>
</dbReference>
<dbReference type="KEGG" id="ath:AT5G06750"/>
<dbReference type="Araport" id="AT5G06750"/>
<dbReference type="TAIR" id="AT5G06750">
    <property type="gene designation" value="APD8"/>
</dbReference>
<dbReference type="eggNOG" id="KOG0700">
    <property type="taxonomic scope" value="Eukaryota"/>
</dbReference>
<dbReference type="HOGENOM" id="CLU_013173_2_0_1"/>
<dbReference type="InParanoid" id="Q84JD5"/>
<dbReference type="OMA" id="GRMNRDD"/>
<dbReference type="PhylomeDB" id="Q84JD5"/>
<dbReference type="PRO" id="PR:Q84JD5"/>
<dbReference type="Proteomes" id="UP000006548">
    <property type="component" value="Chromosome 5"/>
</dbReference>
<dbReference type="ExpressionAtlas" id="Q84JD5">
    <property type="expression patterns" value="baseline and differential"/>
</dbReference>
<dbReference type="GO" id="GO:0046872">
    <property type="term" value="F:metal ion binding"/>
    <property type="evidence" value="ECO:0007669"/>
    <property type="project" value="UniProtKB-KW"/>
</dbReference>
<dbReference type="GO" id="GO:0004722">
    <property type="term" value="F:protein serine/threonine phosphatase activity"/>
    <property type="evidence" value="ECO:0007669"/>
    <property type="project" value="UniProtKB-EC"/>
</dbReference>
<dbReference type="CDD" id="cd00143">
    <property type="entry name" value="PP2Cc"/>
    <property type="match status" value="1"/>
</dbReference>
<dbReference type="FunFam" id="3.60.40.10:FF:000020">
    <property type="entry name" value="Probable protein phosphatase 2C 42"/>
    <property type="match status" value="1"/>
</dbReference>
<dbReference type="Gene3D" id="3.60.40.10">
    <property type="entry name" value="PPM-type phosphatase domain"/>
    <property type="match status" value="1"/>
</dbReference>
<dbReference type="InterPro" id="IPR015655">
    <property type="entry name" value="PP2C"/>
</dbReference>
<dbReference type="InterPro" id="IPR000222">
    <property type="entry name" value="PP2C_BS"/>
</dbReference>
<dbReference type="InterPro" id="IPR036457">
    <property type="entry name" value="PPM-type-like_dom_sf"/>
</dbReference>
<dbReference type="InterPro" id="IPR001932">
    <property type="entry name" value="PPM-type_phosphatase-like_dom"/>
</dbReference>
<dbReference type="PANTHER" id="PTHR47992">
    <property type="entry name" value="PROTEIN PHOSPHATASE"/>
    <property type="match status" value="1"/>
</dbReference>
<dbReference type="Pfam" id="PF00481">
    <property type="entry name" value="PP2C"/>
    <property type="match status" value="1"/>
</dbReference>
<dbReference type="SMART" id="SM00332">
    <property type="entry name" value="PP2Cc"/>
    <property type="match status" value="1"/>
</dbReference>
<dbReference type="SUPFAM" id="SSF81606">
    <property type="entry name" value="PP2C-like"/>
    <property type="match status" value="1"/>
</dbReference>
<dbReference type="PROSITE" id="PS01032">
    <property type="entry name" value="PPM_1"/>
    <property type="match status" value="1"/>
</dbReference>
<dbReference type="PROSITE" id="PS51746">
    <property type="entry name" value="PPM_2"/>
    <property type="match status" value="1"/>
</dbReference>
<accession>Q84JD5</accession>
<accession>Q8LFQ7</accession>
<accession>Q9FG32</accession>
<comment type="function">
    <text evidence="4">May dephosphorylate and repress plasma membrane H(+)-ATPases (PM H(+)-ATPases, e.g. AHA1 and AHA2), thus influencing negatively plant growth and fitness.</text>
</comment>
<comment type="catalytic activity">
    <reaction evidence="2">
        <text>O-phospho-L-seryl-[protein] + H2O = L-seryl-[protein] + phosphate</text>
        <dbReference type="Rhea" id="RHEA:20629"/>
        <dbReference type="Rhea" id="RHEA-COMP:9863"/>
        <dbReference type="Rhea" id="RHEA-COMP:11604"/>
        <dbReference type="ChEBI" id="CHEBI:15377"/>
        <dbReference type="ChEBI" id="CHEBI:29999"/>
        <dbReference type="ChEBI" id="CHEBI:43474"/>
        <dbReference type="ChEBI" id="CHEBI:83421"/>
        <dbReference type="EC" id="3.1.3.16"/>
    </reaction>
</comment>
<comment type="catalytic activity">
    <reaction evidence="2">
        <text>O-phospho-L-threonyl-[protein] + H2O = L-threonyl-[protein] + phosphate</text>
        <dbReference type="Rhea" id="RHEA:47004"/>
        <dbReference type="Rhea" id="RHEA-COMP:11060"/>
        <dbReference type="Rhea" id="RHEA-COMP:11605"/>
        <dbReference type="ChEBI" id="CHEBI:15377"/>
        <dbReference type="ChEBI" id="CHEBI:30013"/>
        <dbReference type="ChEBI" id="CHEBI:43474"/>
        <dbReference type="ChEBI" id="CHEBI:61977"/>
        <dbReference type="EC" id="3.1.3.16"/>
    </reaction>
</comment>
<comment type="cofactor">
    <cofactor evidence="1">
        <name>Mg(2+)</name>
        <dbReference type="ChEBI" id="CHEBI:18420"/>
    </cofactor>
    <cofactor evidence="1">
        <name>Mn(2+)</name>
        <dbReference type="ChEBI" id="CHEBI:29035"/>
    </cofactor>
    <text evidence="1">Binds 2 magnesium or manganese ions per subunit.</text>
</comment>
<comment type="alternative products">
    <event type="alternative splicing"/>
    <isoform>
        <id>Q84JD5-1</id>
        <name>1</name>
        <sequence type="displayed"/>
    </isoform>
    <text>A number of isoforms are produced. According to EST sequences.</text>
</comment>
<comment type="disruption phenotype">
    <text evidence="4">Plants missing PP2C42/PP2C-D2, PP2C64/PP2C-D5, PP2C79/PP2C-D7, PP2C63/PP2C-D8 and PP2C68/PP2C-D9 exhibit an increased hypocotyl length, as well as an enhanced sensitivity to LiCl and media acidification.</text>
</comment>
<comment type="similarity">
    <text evidence="7">Belongs to the PP2C family.</text>
</comment>
<comment type="sequence caution" evidence="7">
    <conflict type="erroneous initiation">
        <sequence resource="EMBL-CDS" id="BAB09809"/>
    </conflict>
    <text>Truncated N-terminus.</text>
</comment>
<keyword id="KW-0025">Alternative splicing</keyword>
<keyword id="KW-0378">Hydrolase</keyword>
<keyword id="KW-0460">Magnesium</keyword>
<keyword id="KW-0464">Manganese</keyword>
<keyword id="KW-0479">Metal-binding</keyword>
<keyword id="KW-0904">Protein phosphatase</keyword>
<keyword id="KW-1185">Reference proteome</keyword>
<evidence type="ECO:0000250" key="1">
    <source>
        <dbReference type="UniProtKB" id="P35813"/>
    </source>
</evidence>
<evidence type="ECO:0000250" key="2">
    <source>
        <dbReference type="UniProtKB" id="Q9LHJ9"/>
    </source>
</evidence>
<evidence type="ECO:0000255" key="3">
    <source>
        <dbReference type="PROSITE-ProRule" id="PRU01082"/>
    </source>
</evidence>
<evidence type="ECO:0000269" key="4">
    <source>
    </source>
</evidence>
<evidence type="ECO:0000303" key="5">
    <source>
    </source>
</evidence>
<evidence type="ECO:0000303" key="6">
    <source>
    </source>
</evidence>
<evidence type="ECO:0000305" key="7"/>
<evidence type="ECO:0000312" key="8">
    <source>
        <dbReference type="Araport" id="AT5G06750"/>
    </source>
</evidence>
<evidence type="ECO:0000312" key="9">
    <source>
        <dbReference type="EMBL" id="BAB09809.1"/>
    </source>
</evidence>